<keyword id="KW-0328">Glycosyltransferase</keyword>
<keyword id="KW-0441">Lipid A biosynthesis</keyword>
<keyword id="KW-0444">Lipid biosynthesis</keyword>
<keyword id="KW-0443">Lipid metabolism</keyword>
<keyword id="KW-1185">Reference proteome</keyword>
<keyword id="KW-0808">Transferase</keyword>
<reference key="1">
    <citation type="journal article" date="2004" name="Science">
        <title>The genomic sequence of the accidental pathogen Legionella pneumophila.</title>
        <authorList>
            <person name="Chien M."/>
            <person name="Morozova I."/>
            <person name="Shi S."/>
            <person name="Sheng H."/>
            <person name="Chen J."/>
            <person name="Gomez S.M."/>
            <person name="Asamani G."/>
            <person name="Hill K."/>
            <person name="Nuara J."/>
            <person name="Feder M."/>
            <person name="Rineer J."/>
            <person name="Greenberg J.J."/>
            <person name="Steshenko V."/>
            <person name="Park S.H."/>
            <person name="Zhao B."/>
            <person name="Teplitskaya E."/>
            <person name="Edwards J.R."/>
            <person name="Pampou S."/>
            <person name="Georghiou A."/>
            <person name="Chou I.-C."/>
            <person name="Iannuccilli W."/>
            <person name="Ulz M.E."/>
            <person name="Kim D.H."/>
            <person name="Geringer-Sameth A."/>
            <person name="Goldsberry C."/>
            <person name="Morozov P."/>
            <person name="Fischer S.G."/>
            <person name="Segal G."/>
            <person name="Qu X."/>
            <person name="Rzhetsky A."/>
            <person name="Zhang P."/>
            <person name="Cayanis E."/>
            <person name="De Jong P.J."/>
            <person name="Ju J."/>
            <person name="Kalachikov S."/>
            <person name="Shuman H.A."/>
            <person name="Russo J.J."/>
        </authorList>
    </citation>
    <scope>NUCLEOTIDE SEQUENCE [LARGE SCALE GENOMIC DNA]</scope>
    <source>
        <strain>Philadelphia 1 / ATCC 33152 / DSM 7513</strain>
    </source>
</reference>
<evidence type="ECO:0000255" key="1">
    <source>
        <dbReference type="HAMAP-Rule" id="MF_00392"/>
    </source>
</evidence>
<organism>
    <name type="scientific">Legionella pneumophila subsp. pneumophila (strain Philadelphia 1 / ATCC 33152 / DSM 7513)</name>
    <dbReference type="NCBI Taxonomy" id="272624"/>
    <lineage>
        <taxon>Bacteria</taxon>
        <taxon>Pseudomonadati</taxon>
        <taxon>Pseudomonadota</taxon>
        <taxon>Gammaproteobacteria</taxon>
        <taxon>Legionellales</taxon>
        <taxon>Legionellaceae</taxon>
        <taxon>Legionella</taxon>
    </lineage>
</organism>
<name>LPXB2_LEGPH</name>
<dbReference type="EC" id="2.4.1.182" evidence="1"/>
<dbReference type="EMBL" id="AE017354">
    <property type="protein sequence ID" value="AAU28991.1"/>
    <property type="molecule type" value="Genomic_DNA"/>
</dbReference>
<dbReference type="RefSeq" id="YP_096938.1">
    <property type="nucleotide sequence ID" value="NC_002942.5"/>
</dbReference>
<dbReference type="SMR" id="Q5ZRD7"/>
<dbReference type="STRING" id="272624.lpg2945"/>
<dbReference type="CAZy" id="GT19">
    <property type="family name" value="Glycosyltransferase Family 19"/>
</dbReference>
<dbReference type="PaxDb" id="272624-lpg2945"/>
<dbReference type="KEGG" id="lpn:lpg2945"/>
<dbReference type="PATRIC" id="fig|272624.6.peg.3145"/>
<dbReference type="eggNOG" id="COG0763">
    <property type="taxonomic scope" value="Bacteria"/>
</dbReference>
<dbReference type="HOGENOM" id="CLU_036577_3_0_6"/>
<dbReference type="OrthoDB" id="9801642at2"/>
<dbReference type="UniPathway" id="UPA00973"/>
<dbReference type="Proteomes" id="UP000000609">
    <property type="component" value="Chromosome"/>
</dbReference>
<dbReference type="GO" id="GO:0016020">
    <property type="term" value="C:membrane"/>
    <property type="evidence" value="ECO:0007669"/>
    <property type="project" value="GOC"/>
</dbReference>
<dbReference type="GO" id="GO:0008915">
    <property type="term" value="F:lipid-A-disaccharide synthase activity"/>
    <property type="evidence" value="ECO:0007669"/>
    <property type="project" value="UniProtKB-UniRule"/>
</dbReference>
<dbReference type="GO" id="GO:0005543">
    <property type="term" value="F:phospholipid binding"/>
    <property type="evidence" value="ECO:0007669"/>
    <property type="project" value="TreeGrafter"/>
</dbReference>
<dbReference type="GO" id="GO:0009245">
    <property type="term" value="P:lipid A biosynthetic process"/>
    <property type="evidence" value="ECO:0007669"/>
    <property type="project" value="UniProtKB-UniRule"/>
</dbReference>
<dbReference type="HAMAP" id="MF_00392">
    <property type="entry name" value="LpxB"/>
    <property type="match status" value="1"/>
</dbReference>
<dbReference type="InterPro" id="IPR003835">
    <property type="entry name" value="Glyco_trans_19"/>
</dbReference>
<dbReference type="NCBIfam" id="TIGR00215">
    <property type="entry name" value="lpxB"/>
    <property type="match status" value="1"/>
</dbReference>
<dbReference type="PANTHER" id="PTHR30372">
    <property type="entry name" value="LIPID-A-DISACCHARIDE SYNTHASE"/>
    <property type="match status" value="1"/>
</dbReference>
<dbReference type="PANTHER" id="PTHR30372:SF4">
    <property type="entry name" value="LIPID-A-DISACCHARIDE SYNTHASE, MITOCHONDRIAL-RELATED"/>
    <property type="match status" value="1"/>
</dbReference>
<dbReference type="Pfam" id="PF02684">
    <property type="entry name" value="LpxB"/>
    <property type="match status" value="1"/>
</dbReference>
<dbReference type="SUPFAM" id="SSF53756">
    <property type="entry name" value="UDP-Glycosyltransferase/glycogen phosphorylase"/>
    <property type="match status" value="1"/>
</dbReference>
<feature type="chain" id="PRO_0000255195" description="Lipid-A-disaccharide synthase 2">
    <location>
        <begin position="1"/>
        <end position="385"/>
    </location>
</feature>
<comment type="function">
    <text evidence="1">Condensation of UDP-2,3-diacylglucosamine and 2,3-diacylglucosamine-1-phosphate to form lipid A disaccharide, a precursor of lipid A, a phosphorylated glycolipid that anchors the lipopolysaccharide to the outer membrane of the cell.</text>
</comment>
<comment type="catalytic activity">
    <reaction evidence="1">
        <text>a lipid X + a UDP-2-N,3-O-bis[(3R)-3-hydroxyacyl]-alpha-D-glucosamine = a lipid A disaccharide + UDP + H(+)</text>
        <dbReference type="Rhea" id="RHEA:67828"/>
        <dbReference type="ChEBI" id="CHEBI:15378"/>
        <dbReference type="ChEBI" id="CHEBI:58223"/>
        <dbReference type="ChEBI" id="CHEBI:137748"/>
        <dbReference type="ChEBI" id="CHEBI:176338"/>
        <dbReference type="ChEBI" id="CHEBI:176343"/>
        <dbReference type="EC" id="2.4.1.182"/>
    </reaction>
</comment>
<comment type="pathway">
    <text evidence="1">Bacterial outer membrane biogenesis; LPS lipid A biosynthesis.</text>
</comment>
<comment type="similarity">
    <text evidence="1">Belongs to the LpxB family.</text>
</comment>
<sequence length="385" mass="43476">MTMKRPTRIAMVAGELSGDLLGAGVIRELKQHLTNVEFMGVGGPQMLKEGFHSLIDISELSVMGISDVLRRYPQLYLIRERLLREWTINPPDVFIGIDYPDFNLSVEARLKKQHIKTIHLVSPKVWAWRQKRVHLIKKAVDLVLTLFPFEEAFYRQHGVSAQFIGHPLADLIEINPSCSTLRKKYNYHSDDTILAVLPGSRVGEIKYMGPLFLEVMQRIAVERPHVHFIVPIACQDLYPVFFKQLHAEYGHLKIQIIQGNAREAMAISDVVLTKSGTATLEAMLLKRPMVVAFKWGILTHAIIAPQVKVPYIALPNLLAGKKLIPEFVQEKANVDSITESVLNLLDSSNQNELIKQFTDIHCTLRQNANEKAALSILRILGTSLT</sequence>
<protein>
    <recommendedName>
        <fullName evidence="1">Lipid-A-disaccharide synthase 2</fullName>
        <ecNumber evidence="1">2.4.1.182</ecNumber>
    </recommendedName>
</protein>
<gene>
    <name evidence="1" type="primary">lpxB2</name>
    <name type="ordered locus">lpg2945</name>
</gene>
<accession>Q5ZRD7</accession>
<proteinExistence type="inferred from homology"/>